<organism>
    <name type="scientific">Cupriavidus necator (strain ATCC 17699 / DSM 428 / KCTC 22496 / NCIMB 10442 / H16 / Stanier 337)</name>
    <name type="common">Ralstonia eutropha</name>
    <dbReference type="NCBI Taxonomy" id="381666"/>
    <lineage>
        <taxon>Bacteria</taxon>
        <taxon>Pseudomonadati</taxon>
        <taxon>Pseudomonadota</taxon>
        <taxon>Betaproteobacteria</taxon>
        <taxon>Burkholderiales</taxon>
        <taxon>Burkholderiaceae</taxon>
        <taxon>Cupriavidus</taxon>
    </lineage>
</organism>
<evidence type="ECO:0000255" key="1">
    <source>
        <dbReference type="HAMAP-Rule" id="MF_00170"/>
    </source>
</evidence>
<comment type="function">
    <text evidence="1">Catalyzes the reversible conversion of ribose-5-phosphate to ribulose 5-phosphate.</text>
</comment>
<comment type="catalytic activity">
    <reaction evidence="1">
        <text>aldehydo-D-ribose 5-phosphate = D-ribulose 5-phosphate</text>
        <dbReference type="Rhea" id="RHEA:14657"/>
        <dbReference type="ChEBI" id="CHEBI:58121"/>
        <dbReference type="ChEBI" id="CHEBI:58273"/>
        <dbReference type="EC" id="5.3.1.6"/>
    </reaction>
</comment>
<comment type="pathway">
    <text evidence="1">Carbohydrate degradation; pentose phosphate pathway; D-ribose 5-phosphate from D-ribulose 5-phosphate (non-oxidative stage): step 1/1.</text>
</comment>
<comment type="subunit">
    <text evidence="1">Homodimer.</text>
</comment>
<comment type="similarity">
    <text evidence="1">Belongs to the ribose 5-phosphate isomerase family.</text>
</comment>
<name>RPIA_CUPNH</name>
<keyword id="KW-0413">Isomerase</keyword>
<keyword id="KW-1185">Reference proteome</keyword>
<sequence length="228" mass="23853">MTQDELKALVAQAAADYVKQEVPEGAVLGVGTGSTANLFIDAVAAFKERFAGAVSSSEASTRRLQQHGFKVLDLNEVDEIPVYVDGADEIDASGAMIKGGGGALTREKIVASVAKRFVCIADGSKLVQTMGTFPLPVEVIPMARAAVARKLQALGGQPRLRMTKEGGIYKTDNGNVILDVAGLKIDDPRGLEQAVNQVPGVVTVGLFALRGADVLLLGTGDGVQRTDY</sequence>
<reference key="1">
    <citation type="journal article" date="2006" name="Nat. Biotechnol.">
        <title>Genome sequence of the bioplastic-producing 'Knallgas' bacterium Ralstonia eutropha H16.</title>
        <authorList>
            <person name="Pohlmann A."/>
            <person name="Fricke W.F."/>
            <person name="Reinecke F."/>
            <person name="Kusian B."/>
            <person name="Liesegang H."/>
            <person name="Cramm R."/>
            <person name="Eitinger T."/>
            <person name="Ewering C."/>
            <person name="Poetter M."/>
            <person name="Schwartz E."/>
            <person name="Strittmatter A."/>
            <person name="Voss I."/>
            <person name="Gottschalk G."/>
            <person name="Steinbuechel A."/>
            <person name="Friedrich B."/>
            <person name="Bowien B."/>
        </authorList>
    </citation>
    <scope>NUCLEOTIDE SEQUENCE [LARGE SCALE GENOMIC DNA]</scope>
    <source>
        <strain>ATCC 17699 / DSM 428 / KCTC 22496 / NCIMB 10442 / H16 / Stanier 337</strain>
    </source>
</reference>
<proteinExistence type="inferred from homology"/>
<accession>Q0K980</accession>
<dbReference type="EC" id="5.3.1.6" evidence="1"/>
<dbReference type="EMBL" id="AM260479">
    <property type="protein sequence ID" value="CAJ93441.1"/>
    <property type="molecule type" value="Genomic_DNA"/>
</dbReference>
<dbReference type="RefSeq" id="WP_011615619.1">
    <property type="nucleotide sequence ID" value="NC_008313.1"/>
</dbReference>
<dbReference type="SMR" id="Q0K980"/>
<dbReference type="STRING" id="381666.H16_A2345"/>
<dbReference type="KEGG" id="reh:H16_A2345"/>
<dbReference type="PATRIC" id="fig|381666.6.peg.2752"/>
<dbReference type="eggNOG" id="COG0120">
    <property type="taxonomic scope" value="Bacteria"/>
</dbReference>
<dbReference type="HOGENOM" id="CLU_056590_1_1_4"/>
<dbReference type="OrthoDB" id="5870696at2"/>
<dbReference type="UniPathway" id="UPA00115">
    <property type="reaction ID" value="UER00412"/>
</dbReference>
<dbReference type="Proteomes" id="UP000008210">
    <property type="component" value="Chromosome 1"/>
</dbReference>
<dbReference type="GO" id="GO:0005829">
    <property type="term" value="C:cytosol"/>
    <property type="evidence" value="ECO:0007669"/>
    <property type="project" value="TreeGrafter"/>
</dbReference>
<dbReference type="GO" id="GO:0004751">
    <property type="term" value="F:ribose-5-phosphate isomerase activity"/>
    <property type="evidence" value="ECO:0007669"/>
    <property type="project" value="UniProtKB-UniRule"/>
</dbReference>
<dbReference type="GO" id="GO:0006014">
    <property type="term" value="P:D-ribose metabolic process"/>
    <property type="evidence" value="ECO:0007669"/>
    <property type="project" value="TreeGrafter"/>
</dbReference>
<dbReference type="GO" id="GO:0009052">
    <property type="term" value="P:pentose-phosphate shunt, non-oxidative branch"/>
    <property type="evidence" value="ECO:0007669"/>
    <property type="project" value="UniProtKB-UniRule"/>
</dbReference>
<dbReference type="CDD" id="cd01398">
    <property type="entry name" value="RPI_A"/>
    <property type="match status" value="1"/>
</dbReference>
<dbReference type="FunFam" id="3.40.50.1360:FF:000001">
    <property type="entry name" value="Ribose-5-phosphate isomerase A"/>
    <property type="match status" value="1"/>
</dbReference>
<dbReference type="Gene3D" id="3.30.70.260">
    <property type="match status" value="1"/>
</dbReference>
<dbReference type="Gene3D" id="3.40.50.1360">
    <property type="match status" value="1"/>
</dbReference>
<dbReference type="HAMAP" id="MF_00170">
    <property type="entry name" value="Rib_5P_isom_A"/>
    <property type="match status" value="1"/>
</dbReference>
<dbReference type="InterPro" id="IPR037171">
    <property type="entry name" value="NagB/RpiA_transferase-like"/>
</dbReference>
<dbReference type="InterPro" id="IPR020672">
    <property type="entry name" value="Ribose5P_isomerase_typA_subgr"/>
</dbReference>
<dbReference type="InterPro" id="IPR004788">
    <property type="entry name" value="Ribose5P_isomerase_type_A"/>
</dbReference>
<dbReference type="NCBIfam" id="NF001924">
    <property type="entry name" value="PRK00702.1"/>
    <property type="match status" value="1"/>
</dbReference>
<dbReference type="NCBIfam" id="TIGR00021">
    <property type="entry name" value="rpiA"/>
    <property type="match status" value="1"/>
</dbReference>
<dbReference type="PANTHER" id="PTHR11934">
    <property type="entry name" value="RIBOSE-5-PHOSPHATE ISOMERASE"/>
    <property type="match status" value="1"/>
</dbReference>
<dbReference type="PANTHER" id="PTHR11934:SF0">
    <property type="entry name" value="RIBOSE-5-PHOSPHATE ISOMERASE"/>
    <property type="match status" value="1"/>
</dbReference>
<dbReference type="Pfam" id="PF06026">
    <property type="entry name" value="Rib_5-P_isom_A"/>
    <property type="match status" value="1"/>
</dbReference>
<dbReference type="SUPFAM" id="SSF75445">
    <property type="entry name" value="D-ribose-5-phosphate isomerase (RpiA), lid domain"/>
    <property type="match status" value="1"/>
</dbReference>
<dbReference type="SUPFAM" id="SSF100950">
    <property type="entry name" value="NagB/RpiA/CoA transferase-like"/>
    <property type="match status" value="1"/>
</dbReference>
<protein>
    <recommendedName>
        <fullName evidence="1">Ribose-5-phosphate isomerase A</fullName>
        <ecNumber evidence="1">5.3.1.6</ecNumber>
    </recommendedName>
    <alternativeName>
        <fullName evidence="1">Phosphoriboisomerase A</fullName>
        <shortName evidence="1">PRI</shortName>
    </alternativeName>
</protein>
<feature type="chain" id="PRO_1000016971" description="Ribose-5-phosphate isomerase A">
    <location>
        <begin position="1"/>
        <end position="228"/>
    </location>
</feature>
<feature type="active site" description="Proton acceptor" evidence="1">
    <location>
        <position position="107"/>
    </location>
</feature>
<feature type="binding site" evidence="1">
    <location>
        <begin position="32"/>
        <end position="35"/>
    </location>
    <ligand>
        <name>substrate</name>
    </ligand>
</feature>
<feature type="binding site" evidence="1">
    <location>
        <begin position="85"/>
        <end position="88"/>
    </location>
    <ligand>
        <name>substrate</name>
    </ligand>
</feature>
<feature type="binding site" evidence="1">
    <location>
        <begin position="98"/>
        <end position="101"/>
    </location>
    <ligand>
        <name>substrate</name>
    </ligand>
</feature>
<feature type="binding site" evidence="1">
    <location>
        <position position="125"/>
    </location>
    <ligand>
        <name>substrate</name>
    </ligand>
</feature>
<gene>
    <name evidence="1" type="primary">rpiA</name>
    <name type="ordered locus">H16_A2345</name>
</gene>